<name>KAD_WOLWR</name>
<feature type="chain" id="PRO_1000125172" description="Adenylate kinase">
    <location>
        <begin position="1"/>
        <end position="213"/>
    </location>
</feature>
<feature type="region of interest" description="NMP" evidence="1">
    <location>
        <begin position="30"/>
        <end position="59"/>
    </location>
</feature>
<feature type="region of interest" description="LID" evidence="1">
    <location>
        <begin position="125"/>
        <end position="160"/>
    </location>
</feature>
<feature type="binding site" evidence="1">
    <location>
        <begin position="10"/>
        <end position="15"/>
    </location>
    <ligand>
        <name>ATP</name>
        <dbReference type="ChEBI" id="CHEBI:30616"/>
    </ligand>
</feature>
<feature type="binding site" evidence="1">
    <location>
        <position position="36"/>
    </location>
    <ligand>
        <name>AMP</name>
        <dbReference type="ChEBI" id="CHEBI:456215"/>
    </ligand>
</feature>
<feature type="binding site" evidence="1">
    <location>
        <begin position="57"/>
        <end position="59"/>
    </location>
    <ligand>
        <name>AMP</name>
        <dbReference type="ChEBI" id="CHEBI:456215"/>
    </ligand>
</feature>
<feature type="binding site" evidence="1">
    <location>
        <begin position="83"/>
        <end position="86"/>
    </location>
    <ligand>
        <name>AMP</name>
        <dbReference type="ChEBI" id="CHEBI:456215"/>
    </ligand>
</feature>
<feature type="binding site" evidence="1">
    <location>
        <position position="90"/>
    </location>
    <ligand>
        <name>AMP</name>
        <dbReference type="ChEBI" id="CHEBI:456215"/>
    </ligand>
</feature>
<feature type="binding site" evidence="1">
    <location>
        <position position="126"/>
    </location>
    <ligand>
        <name>ATP</name>
        <dbReference type="ChEBI" id="CHEBI:30616"/>
    </ligand>
</feature>
<feature type="binding site" evidence="1">
    <location>
        <position position="129"/>
    </location>
    <ligand>
        <name>Zn(2+)</name>
        <dbReference type="ChEBI" id="CHEBI:29105"/>
        <note>structural</note>
    </ligand>
</feature>
<feature type="binding site" evidence="1">
    <location>
        <position position="132"/>
    </location>
    <ligand>
        <name>Zn(2+)</name>
        <dbReference type="ChEBI" id="CHEBI:29105"/>
        <note>structural</note>
    </ligand>
</feature>
<feature type="binding site" evidence="1">
    <location>
        <begin position="135"/>
        <end position="136"/>
    </location>
    <ligand>
        <name>ATP</name>
        <dbReference type="ChEBI" id="CHEBI:30616"/>
    </ligand>
</feature>
<feature type="binding site" evidence="1">
    <location>
        <position position="146"/>
    </location>
    <ligand>
        <name>Zn(2+)</name>
        <dbReference type="ChEBI" id="CHEBI:29105"/>
        <note>structural</note>
    </ligand>
</feature>
<feature type="binding site" evidence="1">
    <location>
        <position position="149"/>
    </location>
    <ligand>
        <name>Zn(2+)</name>
        <dbReference type="ChEBI" id="CHEBI:29105"/>
        <note>structural</note>
    </ligand>
</feature>
<feature type="binding site" evidence="1">
    <location>
        <position position="157"/>
    </location>
    <ligand>
        <name>AMP</name>
        <dbReference type="ChEBI" id="CHEBI:456215"/>
    </ligand>
</feature>
<feature type="binding site" evidence="1">
    <location>
        <position position="169"/>
    </location>
    <ligand>
        <name>AMP</name>
        <dbReference type="ChEBI" id="CHEBI:456215"/>
    </ligand>
</feature>
<feature type="binding site" evidence="1">
    <location>
        <position position="195"/>
    </location>
    <ligand>
        <name>ATP</name>
        <dbReference type="ChEBI" id="CHEBI:30616"/>
    </ligand>
</feature>
<accession>C0R2Y9</accession>
<proteinExistence type="inferred from homology"/>
<comment type="function">
    <text evidence="1">Catalyzes the reversible transfer of the terminal phosphate group between ATP and AMP. Plays an important role in cellular energy homeostasis and in adenine nucleotide metabolism.</text>
</comment>
<comment type="catalytic activity">
    <reaction evidence="1">
        <text>AMP + ATP = 2 ADP</text>
        <dbReference type="Rhea" id="RHEA:12973"/>
        <dbReference type="ChEBI" id="CHEBI:30616"/>
        <dbReference type="ChEBI" id="CHEBI:456215"/>
        <dbReference type="ChEBI" id="CHEBI:456216"/>
        <dbReference type="EC" id="2.7.4.3"/>
    </reaction>
</comment>
<comment type="pathway">
    <text evidence="1">Purine metabolism; AMP biosynthesis via salvage pathway; AMP from ADP: step 1/1.</text>
</comment>
<comment type="subunit">
    <text evidence="1">Monomer.</text>
</comment>
<comment type="subcellular location">
    <subcellularLocation>
        <location evidence="1">Cytoplasm</location>
    </subcellularLocation>
</comment>
<comment type="domain">
    <text evidence="1">Consists of three domains, a large central CORE domain and two small peripheral domains, NMPbind and LID, which undergo movements during catalysis. The LID domain closes over the site of phosphoryl transfer upon ATP binding. Assembling and dissambling the active center during each catalytic cycle provides an effective means to prevent ATP hydrolysis. Some bacteria have evolved a zinc-coordinating structure that stabilizes the LID domain.</text>
</comment>
<comment type="similarity">
    <text evidence="1">Belongs to the adenylate kinase family.</text>
</comment>
<protein>
    <recommendedName>
        <fullName evidence="1">Adenylate kinase</fullName>
        <shortName evidence="1">AK</shortName>
        <ecNumber evidence="1">2.7.4.3</ecNumber>
    </recommendedName>
    <alternativeName>
        <fullName evidence="1">ATP-AMP transphosphorylase</fullName>
    </alternativeName>
    <alternativeName>
        <fullName evidence="1">ATP:AMP phosphotransferase</fullName>
    </alternativeName>
    <alternativeName>
        <fullName evidence="1">Adenylate monophosphate kinase</fullName>
    </alternativeName>
</protein>
<dbReference type="EC" id="2.7.4.3" evidence="1"/>
<dbReference type="EMBL" id="CP001391">
    <property type="protein sequence ID" value="ACN95281.1"/>
    <property type="molecule type" value="Genomic_DNA"/>
</dbReference>
<dbReference type="RefSeq" id="WP_007550178.1">
    <property type="nucleotide sequence ID" value="NZ_MKIF01000201.1"/>
</dbReference>
<dbReference type="SMR" id="C0R2Y9"/>
<dbReference type="STRING" id="66084.WRi_004990"/>
<dbReference type="KEGG" id="wri:WRi_004990"/>
<dbReference type="HOGENOM" id="CLU_032354_1_2_5"/>
<dbReference type="UniPathway" id="UPA00588">
    <property type="reaction ID" value="UER00649"/>
</dbReference>
<dbReference type="Proteomes" id="UP000001293">
    <property type="component" value="Chromosome"/>
</dbReference>
<dbReference type="GO" id="GO:0005737">
    <property type="term" value="C:cytoplasm"/>
    <property type="evidence" value="ECO:0007669"/>
    <property type="project" value="UniProtKB-SubCell"/>
</dbReference>
<dbReference type="GO" id="GO:0004017">
    <property type="term" value="F:adenylate kinase activity"/>
    <property type="evidence" value="ECO:0007669"/>
    <property type="project" value="UniProtKB-UniRule"/>
</dbReference>
<dbReference type="GO" id="GO:0005524">
    <property type="term" value="F:ATP binding"/>
    <property type="evidence" value="ECO:0007669"/>
    <property type="project" value="UniProtKB-UniRule"/>
</dbReference>
<dbReference type="GO" id="GO:0008270">
    <property type="term" value="F:zinc ion binding"/>
    <property type="evidence" value="ECO:0007669"/>
    <property type="project" value="UniProtKB-UniRule"/>
</dbReference>
<dbReference type="GO" id="GO:0044209">
    <property type="term" value="P:AMP salvage"/>
    <property type="evidence" value="ECO:0007669"/>
    <property type="project" value="UniProtKB-UniRule"/>
</dbReference>
<dbReference type="CDD" id="cd01428">
    <property type="entry name" value="ADK"/>
    <property type="match status" value="1"/>
</dbReference>
<dbReference type="Gene3D" id="3.40.50.300">
    <property type="entry name" value="P-loop containing nucleotide triphosphate hydrolases"/>
    <property type="match status" value="1"/>
</dbReference>
<dbReference type="HAMAP" id="MF_00235">
    <property type="entry name" value="Adenylate_kinase_Adk"/>
    <property type="match status" value="1"/>
</dbReference>
<dbReference type="InterPro" id="IPR006259">
    <property type="entry name" value="Adenyl_kin_sub"/>
</dbReference>
<dbReference type="InterPro" id="IPR000850">
    <property type="entry name" value="Adenylat/UMP-CMP_kin"/>
</dbReference>
<dbReference type="InterPro" id="IPR033690">
    <property type="entry name" value="Adenylat_kinase_CS"/>
</dbReference>
<dbReference type="InterPro" id="IPR027417">
    <property type="entry name" value="P-loop_NTPase"/>
</dbReference>
<dbReference type="NCBIfam" id="TIGR01351">
    <property type="entry name" value="adk"/>
    <property type="match status" value="1"/>
</dbReference>
<dbReference type="PANTHER" id="PTHR23359">
    <property type="entry name" value="NUCLEOTIDE KINASE"/>
    <property type="match status" value="1"/>
</dbReference>
<dbReference type="Pfam" id="PF00406">
    <property type="entry name" value="ADK"/>
    <property type="match status" value="1"/>
</dbReference>
<dbReference type="PRINTS" id="PR00094">
    <property type="entry name" value="ADENYLTKNASE"/>
</dbReference>
<dbReference type="SUPFAM" id="SSF52540">
    <property type="entry name" value="P-loop containing nucleoside triphosphate hydrolases"/>
    <property type="match status" value="1"/>
</dbReference>
<dbReference type="PROSITE" id="PS00113">
    <property type="entry name" value="ADENYLATE_KINASE"/>
    <property type="match status" value="1"/>
</dbReference>
<organism>
    <name type="scientific">Wolbachia sp. subsp. Drosophila simulans (strain wRi)</name>
    <dbReference type="NCBI Taxonomy" id="66084"/>
    <lineage>
        <taxon>Bacteria</taxon>
        <taxon>Pseudomonadati</taxon>
        <taxon>Pseudomonadota</taxon>
        <taxon>Alphaproteobacteria</taxon>
        <taxon>Rickettsiales</taxon>
        <taxon>Anaplasmataceae</taxon>
        <taxon>Wolbachieae</taxon>
        <taxon>Wolbachia</taxon>
    </lineage>
</organism>
<gene>
    <name evidence="1" type="primary">adk</name>
    <name type="ordered locus">WRi_004990</name>
</gene>
<sequence length="213" mass="23759">MIITIFGPPGSGKGTQSSLLIAKYNLKLISVGDLLRNIISSSSELGKKIKGTVESGNLIQDEIICGLLRDQLALVDDNCLLDGFPRNLNQAHFLTQVLQEKYNRDVDIVVELQLDDNIAIDRLKNRLACLDCKSIYSVSSFKSTTCAKCKSTRLEKRIDDADMSAINKRISEYHLQMKGLREYYKGKLLTIDANLSVDEVTQEIESKISCNLV</sequence>
<keyword id="KW-0067">ATP-binding</keyword>
<keyword id="KW-0963">Cytoplasm</keyword>
<keyword id="KW-0418">Kinase</keyword>
<keyword id="KW-0479">Metal-binding</keyword>
<keyword id="KW-0545">Nucleotide biosynthesis</keyword>
<keyword id="KW-0547">Nucleotide-binding</keyword>
<keyword id="KW-0808">Transferase</keyword>
<keyword id="KW-0862">Zinc</keyword>
<reference key="1">
    <citation type="journal article" date="2009" name="Proc. Natl. Acad. Sci. U.S.A.">
        <title>The mosaic genome structure of the Wolbachia wRi strain infecting Drosophila simulans.</title>
        <authorList>
            <person name="Klasson L."/>
            <person name="Westberg J."/>
            <person name="Sapountzis P."/>
            <person name="Naeslund K."/>
            <person name="Lutnaes Y."/>
            <person name="Darby A.C."/>
            <person name="Veneti Z."/>
            <person name="Chen L."/>
            <person name="Braig H.R."/>
            <person name="Garrett R."/>
            <person name="Bourtzis K."/>
            <person name="Andersson S.G."/>
        </authorList>
    </citation>
    <scope>NUCLEOTIDE SEQUENCE [LARGE SCALE GENOMIC DNA]</scope>
    <source>
        <strain>wRi</strain>
    </source>
</reference>
<evidence type="ECO:0000255" key="1">
    <source>
        <dbReference type="HAMAP-Rule" id="MF_00235"/>
    </source>
</evidence>